<protein>
    <recommendedName>
        <fullName evidence="1">tRNA uridine(34) hydroxylase</fullName>
        <ecNumber evidence="1">1.14.-.-</ecNumber>
    </recommendedName>
    <alternativeName>
        <fullName evidence="1">tRNA hydroxylation protein O</fullName>
    </alternativeName>
</protein>
<sequence length="323" mass="36513">MPQIVVAALYKFVSLPDYQELQPGLLALCNAQGIKGTLLLAEEGINGTVAGSRAAIDALLTYLRQDSRMVDIDHKESFADEMPFYRMKVRLKKEIVTLGVPGISPNKKVGTYVKPEDWNTLISDPDVVVIDTRNNYEYEIGTFKGAIDPATTTFRQFPEFVRKNLDPAKNKKVAMFCTGGIRCEKASSYMLEQGFKEVYHLQGGILKYLETIPEEESLWEGECFVFDQRVAVKHGLQVGDYDQCFACRHPISAADMASSKYVKGISCPRCYDRMSAEKRARIAERQRQIEIARQRGEEHIGDNARQYSLIHKLSKTKKILPKT</sequence>
<gene>
    <name evidence="1" type="primary">trhO</name>
    <name type="ordered locus">Mfla_2319</name>
</gene>
<comment type="function">
    <text evidence="1">Catalyzes oxygen-dependent 5-hydroxyuridine (ho5U) modification at position 34 in tRNAs.</text>
</comment>
<comment type="catalytic activity">
    <reaction evidence="1">
        <text>uridine(34) in tRNA + AH2 + O2 = 5-hydroxyuridine(34) in tRNA + A + H2O</text>
        <dbReference type="Rhea" id="RHEA:64224"/>
        <dbReference type="Rhea" id="RHEA-COMP:11727"/>
        <dbReference type="Rhea" id="RHEA-COMP:13381"/>
        <dbReference type="ChEBI" id="CHEBI:13193"/>
        <dbReference type="ChEBI" id="CHEBI:15377"/>
        <dbReference type="ChEBI" id="CHEBI:15379"/>
        <dbReference type="ChEBI" id="CHEBI:17499"/>
        <dbReference type="ChEBI" id="CHEBI:65315"/>
        <dbReference type="ChEBI" id="CHEBI:136877"/>
    </reaction>
</comment>
<comment type="similarity">
    <text evidence="1">Belongs to the TrhO family.</text>
</comment>
<organism>
    <name type="scientific">Methylobacillus flagellatus (strain ATCC 51484 / DSM 6875 / VKM B-1610 / KT)</name>
    <dbReference type="NCBI Taxonomy" id="265072"/>
    <lineage>
        <taxon>Bacteria</taxon>
        <taxon>Pseudomonadati</taxon>
        <taxon>Pseudomonadota</taxon>
        <taxon>Betaproteobacteria</taxon>
        <taxon>Nitrosomonadales</taxon>
        <taxon>Methylophilaceae</taxon>
        <taxon>Methylobacillus</taxon>
    </lineage>
</organism>
<evidence type="ECO:0000255" key="1">
    <source>
        <dbReference type="HAMAP-Rule" id="MF_00469"/>
    </source>
</evidence>
<keyword id="KW-0560">Oxidoreductase</keyword>
<keyword id="KW-1185">Reference proteome</keyword>
<keyword id="KW-0819">tRNA processing</keyword>
<dbReference type="EC" id="1.14.-.-" evidence="1"/>
<dbReference type="EMBL" id="CP000284">
    <property type="protein sequence ID" value="ABE50586.1"/>
    <property type="molecule type" value="Genomic_DNA"/>
</dbReference>
<dbReference type="RefSeq" id="WP_011480540.1">
    <property type="nucleotide sequence ID" value="NC_007947.1"/>
</dbReference>
<dbReference type="SMR" id="Q1GYV1"/>
<dbReference type="STRING" id="265072.Mfla_2319"/>
<dbReference type="KEGG" id="mfa:Mfla_2319"/>
<dbReference type="eggNOG" id="COG1054">
    <property type="taxonomic scope" value="Bacteria"/>
</dbReference>
<dbReference type="HOGENOM" id="CLU_038878_0_0_4"/>
<dbReference type="OrthoDB" id="9778326at2"/>
<dbReference type="Proteomes" id="UP000002440">
    <property type="component" value="Chromosome"/>
</dbReference>
<dbReference type="GO" id="GO:0016705">
    <property type="term" value="F:oxidoreductase activity, acting on paired donors, with incorporation or reduction of molecular oxygen"/>
    <property type="evidence" value="ECO:0007669"/>
    <property type="project" value="UniProtKB-UniRule"/>
</dbReference>
<dbReference type="GO" id="GO:0006400">
    <property type="term" value="P:tRNA modification"/>
    <property type="evidence" value="ECO:0007669"/>
    <property type="project" value="UniProtKB-UniRule"/>
</dbReference>
<dbReference type="CDD" id="cd01518">
    <property type="entry name" value="RHOD_YceA"/>
    <property type="match status" value="1"/>
</dbReference>
<dbReference type="Gene3D" id="3.30.70.100">
    <property type="match status" value="1"/>
</dbReference>
<dbReference type="Gene3D" id="3.40.250.10">
    <property type="entry name" value="Rhodanese-like domain"/>
    <property type="match status" value="1"/>
</dbReference>
<dbReference type="HAMAP" id="MF_00469">
    <property type="entry name" value="TrhO"/>
    <property type="match status" value="1"/>
</dbReference>
<dbReference type="InterPro" id="IPR001763">
    <property type="entry name" value="Rhodanese-like_dom"/>
</dbReference>
<dbReference type="InterPro" id="IPR036873">
    <property type="entry name" value="Rhodanese-like_dom_sf"/>
</dbReference>
<dbReference type="InterPro" id="IPR020936">
    <property type="entry name" value="TrhO"/>
</dbReference>
<dbReference type="InterPro" id="IPR040503">
    <property type="entry name" value="TRHO_N"/>
</dbReference>
<dbReference type="NCBIfam" id="NF001136">
    <property type="entry name" value="PRK00142.1-4"/>
    <property type="match status" value="1"/>
</dbReference>
<dbReference type="PANTHER" id="PTHR43268:SF3">
    <property type="entry name" value="RHODANESE-LIKE DOMAIN-CONTAINING PROTEIN 7-RELATED"/>
    <property type="match status" value="1"/>
</dbReference>
<dbReference type="PANTHER" id="PTHR43268">
    <property type="entry name" value="THIOSULFATE SULFURTRANSFERASE/RHODANESE-LIKE DOMAIN-CONTAINING PROTEIN 2"/>
    <property type="match status" value="1"/>
</dbReference>
<dbReference type="Pfam" id="PF00581">
    <property type="entry name" value="Rhodanese"/>
    <property type="match status" value="1"/>
</dbReference>
<dbReference type="Pfam" id="PF17773">
    <property type="entry name" value="UPF0176_N"/>
    <property type="match status" value="1"/>
</dbReference>
<dbReference type="SMART" id="SM00450">
    <property type="entry name" value="RHOD"/>
    <property type="match status" value="1"/>
</dbReference>
<dbReference type="SUPFAM" id="SSF52821">
    <property type="entry name" value="Rhodanese/Cell cycle control phosphatase"/>
    <property type="match status" value="1"/>
</dbReference>
<dbReference type="PROSITE" id="PS50206">
    <property type="entry name" value="RHODANESE_3"/>
    <property type="match status" value="1"/>
</dbReference>
<feature type="chain" id="PRO_1000013751" description="tRNA uridine(34) hydroxylase">
    <location>
        <begin position="1"/>
        <end position="323"/>
    </location>
</feature>
<feature type="domain" description="Rhodanese" evidence="1">
    <location>
        <begin position="123"/>
        <end position="217"/>
    </location>
</feature>
<feature type="active site" description="Cysteine persulfide intermediate" evidence="1">
    <location>
        <position position="177"/>
    </location>
</feature>
<proteinExistence type="inferred from homology"/>
<name>TRHO_METFK</name>
<reference key="1">
    <citation type="submission" date="2006-03" db="EMBL/GenBank/DDBJ databases">
        <title>Complete sequence of Methylobacillus flagellatus KT.</title>
        <authorList>
            <consortium name="US DOE Joint Genome Institute"/>
            <person name="Copeland A."/>
            <person name="Lucas S."/>
            <person name="Lapidus A."/>
            <person name="Barry K."/>
            <person name="Detter J.C."/>
            <person name="Glavina del Rio T."/>
            <person name="Hammon N."/>
            <person name="Israni S."/>
            <person name="Dalin E."/>
            <person name="Tice H."/>
            <person name="Pitluck S."/>
            <person name="Brettin T."/>
            <person name="Bruce D."/>
            <person name="Han C."/>
            <person name="Tapia R."/>
            <person name="Saunders E."/>
            <person name="Gilna P."/>
            <person name="Schmutz J."/>
            <person name="Larimer F."/>
            <person name="Land M."/>
            <person name="Kyrpides N."/>
            <person name="Anderson I."/>
            <person name="Richardson P."/>
        </authorList>
    </citation>
    <scope>NUCLEOTIDE SEQUENCE [LARGE SCALE GENOMIC DNA]</scope>
    <source>
        <strain>ATCC 51484 / DSM 6875 / VKM B-1610 / KT</strain>
    </source>
</reference>
<accession>Q1GYV1</accession>